<gene>
    <name type="primary">ydaG</name>
    <name type="synonym">yzzA</name>
    <name type="ordered locus">BSU04220</name>
</gene>
<dbReference type="EMBL" id="AB001488">
    <property type="protein sequence ID" value="BAA19260.1"/>
    <property type="molecule type" value="Genomic_DNA"/>
</dbReference>
<dbReference type="EMBL" id="AL009126">
    <property type="protein sequence ID" value="CAB12229.1"/>
    <property type="molecule type" value="Genomic_DNA"/>
</dbReference>
<dbReference type="PIR" id="G69768">
    <property type="entry name" value="G69768"/>
</dbReference>
<dbReference type="RefSeq" id="NP_388303.1">
    <property type="nucleotide sequence ID" value="NC_000964.3"/>
</dbReference>
<dbReference type="RefSeq" id="WP_003234396.1">
    <property type="nucleotide sequence ID" value="NZ_OZ025638.1"/>
</dbReference>
<dbReference type="SMR" id="P80238"/>
<dbReference type="FunCoup" id="P80238">
    <property type="interactions" value="55"/>
</dbReference>
<dbReference type="STRING" id="224308.BSU04220"/>
<dbReference type="PaxDb" id="224308-BSU04220"/>
<dbReference type="EnsemblBacteria" id="CAB12229">
    <property type="protein sequence ID" value="CAB12229"/>
    <property type="gene ID" value="BSU_04220"/>
</dbReference>
<dbReference type="GeneID" id="939958"/>
<dbReference type="KEGG" id="bsu:BSU04220"/>
<dbReference type="PATRIC" id="fig|224308.179.peg.448"/>
<dbReference type="eggNOG" id="COG3871">
    <property type="taxonomic scope" value="Bacteria"/>
</dbReference>
<dbReference type="InParanoid" id="P80238"/>
<dbReference type="OrthoDB" id="5431160at2"/>
<dbReference type="PhylomeDB" id="P80238"/>
<dbReference type="BioCyc" id="BSUB:BSU04220-MONOMER"/>
<dbReference type="Proteomes" id="UP000001570">
    <property type="component" value="Chromosome"/>
</dbReference>
<dbReference type="Gene3D" id="2.30.110.10">
    <property type="entry name" value="Electron Transport, Fmn-binding Protein, Chain A"/>
    <property type="match status" value="1"/>
</dbReference>
<dbReference type="InterPro" id="IPR011576">
    <property type="entry name" value="Pyridox_Oxase_N"/>
</dbReference>
<dbReference type="InterPro" id="IPR012349">
    <property type="entry name" value="Split_barrel_FMN-bd"/>
</dbReference>
<dbReference type="InterPro" id="IPR052917">
    <property type="entry name" value="Stress-Dev_Protein"/>
</dbReference>
<dbReference type="PANTHER" id="PTHR34818">
    <property type="entry name" value="PROTEIN BLI-3"/>
    <property type="match status" value="1"/>
</dbReference>
<dbReference type="PANTHER" id="PTHR34818:SF1">
    <property type="entry name" value="PROTEIN BLI-3"/>
    <property type="match status" value="1"/>
</dbReference>
<dbReference type="Pfam" id="PF01243">
    <property type="entry name" value="PNPOx_N"/>
    <property type="match status" value="1"/>
</dbReference>
<dbReference type="SUPFAM" id="SSF50475">
    <property type="entry name" value="FMN-binding split barrel"/>
    <property type="match status" value="1"/>
</dbReference>
<name>GS26_BACSU</name>
<comment type="induction">
    <text>By heat shock, salt stress, oxidative stress, glucose limitation and oxygen limitation.</text>
</comment>
<reference key="1">
    <citation type="submission" date="1997-03" db="EMBL/GenBank/DDBJ databases">
        <title>A 148 kbp sequence of the region between 35 and 47 degree of the Bacillus subtilis genome.</title>
        <authorList>
            <person name="Kasahara Y."/>
            <person name="Nakai S."/>
            <person name="Lee S."/>
            <person name="Sadaie Y."/>
            <person name="Ogasawara N."/>
        </authorList>
    </citation>
    <scope>NUCLEOTIDE SEQUENCE [GENOMIC DNA]</scope>
    <source>
        <strain>168</strain>
    </source>
</reference>
<reference key="2">
    <citation type="journal article" date="1997" name="Nature">
        <title>The complete genome sequence of the Gram-positive bacterium Bacillus subtilis.</title>
        <authorList>
            <person name="Kunst F."/>
            <person name="Ogasawara N."/>
            <person name="Moszer I."/>
            <person name="Albertini A.M."/>
            <person name="Alloni G."/>
            <person name="Azevedo V."/>
            <person name="Bertero M.G."/>
            <person name="Bessieres P."/>
            <person name="Bolotin A."/>
            <person name="Borchert S."/>
            <person name="Borriss R."/>
            <person name="Boursier L."/>
            <person name="Brans A."/>
            <person name="Braun M."/>
            <person name="Brignell S.C."/>
            <person name="Bron S."/>
            <person name="Brouillet S."/>
            <person name="Bruschi C.V."/>
            <person name="Caldwell B."/>
            <person name="Capuano V."/>
            <person name="Carter N.M."/>
            <person name="Choi S.-K."/>
            <person name="Codani J.-J."/>
            <person name="Connerton I.F."/>
            <person name="Cummings N.J."/>
            <person name="Daniel R.A."/>
            <person name="Denizot F."/>
            <person name="Devine K.M."/>
            <person name="Duesterhoeft A."/>
            <person name="Ehrlich S.D."/>
            <person name="Emmerson P.T."/>
            <person name="Entian K.-D."/>
            <person name="Errington J."/>
            <person name="Fabret C."/>
            <person name="Ferrari E."/>
            <person name="Foulger D."/>
            <person name="Fritz C."/>
            <person name="Fujita M."/>
            <person name="Fujita Y."/>
            <person name="Fuma S."/>
            <person name="Galizzi A."/>
            <person name="Galleron N."/>
            <person name="Ghim S.-Y."/>
            <person name="Glaser P."/>
            <person name="Goffeau A."/>
            <person name="Golightly E.J."/>
            <person name="Grandi G."/>
            <person name="Guiseppi G."/>
            <person name="Guy B.J."/>
            <person name="Haga K."/>
            <person name="Haiech J."/>
            <person name="Harwood C.R."/>
            <person name="Henaut A."/>
            <person name="Hilbert H."/>
            <person name="Holsappel S."/>
            <person name="Hosono S."/>
            <person name="Hullo M.-F."/>
            <person name="Itaya M."/>
            <person name="Jones L.-M."/>
            <person name="Joris B."/>
            <person name="Karamata D."/>
            <person name="Kasahara Y."/>
            <person name="Klaerr-Blanchard M."/>
            <person name="Klein C."/>
            <person name="Kobayashi Y."/>
            <person name="Koetter P."/>
            <person name="Koningstein G."/>
            <person name="Krogh S."/>
            <person name="Kumano M."/>
            <person name="Kurita K."/>
            <person name="Lapidus A."/>
            <person name="Lardinois S."/>
            <person name="Lauber J."/>
            <person name="Lazarevic V."/>
            <person name="Lee S.-M."/>
            <person name="Levine A."/>
            <person name="Liu H."/>
            <person name="Masuda S."/>
            <person name="Mauel C."/>
            <person name="Medigue C."/>
            <person name="Medina N."/>
            <person name="Mellado R.P."/>
            <person name="Mizuno M."/>
            <person name="Moestl D."/>
            <person name="Nakai S."/>
            <person name="Noback M."/>
            <person name="Noone D."/>
            <person name="O'Reilly M."/>
            <person name="Ogawa K."/>
            <person name="Ogiwara A."/>
            <person name="Oudega B."/>
            <person name="Park S.-H."/>
            <person name="Parro V."/>
            <person name="Pohl T.M."/>
            <person name="Portetelle D."/>
            <person name="Porwollik S."/>
            <person name="Prescott A.M."/>
            <person name="Presecan E."/>
            <person name="Pujic P."/>
            <person name="Purnelle B."/>
            <person name="Rapoport G."/>
            <person name="Rey M."/>
            <person name="Reynolds S."/>
            <person name="Rieger M."/>
            <person name="Rivolta C."/>
            <person name="Rocha E."/>
            <person name="Roche B."/>
            <person name="Rose M."/>
            <person name="Sadaie Y."/>
            <person name="Sato T."/>
            <person name="Scanlan E."/>
            <person name="Schleich S."/>
            <person name="Schroeter R."/>
            <person name="Scoffone F."/>
            <person name="Sekiguchi J."/>
            <person name="Sekowska A."/>
            <person name="Seror S.J."/>
            <person name="Serror P."/>
            <person name="Shin B.-S."/>
            <person name="Soldo B."/>
            <person name="Sorokin A."/>
            <person name="Tacconi E."/>
            <person name="Takagi T."/>
            <person name="Takahashi H."/>
            <person name="Takemaru K."/>
            <person name="Takeuchi M."/>
            <person name="Tamakoshi A."/>
            <person name="Tanaka T."/>
            <person name="Terpstra P."/>
            <person name="Tognoni A."/>
            <person name="Tosato V."/>
            <person name="Uchiyama S."/>
            <person name="Vandenbol M."/>
            <person name="Vannier F."/>
            <person name="Vassarotti A."/>
            <person name="Viari A."/>
            <person name="Wambutt R."/>
            <person name="Wedler E."/>
            <person name="Wedler H."/>
            <person name="Weitzenegger T."/>
            <person name="Winters P."/>
            <person name="Wipat A."/>
            <person name="Yamamoto H."/>
            <person name="Yamane K."/>
            <person name="Yasumoto K."/>
            <person name="Yata K."/>
            <person name="Yoshida K."/>
            <person name="Yoshikawa H.-F."/>
            <person name="Zumstein E."/>
            <person name="Yoshikawa H."/>
            <person name="Danchin A."/>
        </authorList>
    </citation>
    <scope>NUCLEOTIDE SEQUENCE [LARGE SCALE GENOMIC DNA]</scope>
    <source>
        <strain>168</strain>
    </source>
</reference>
<reference key="3">
    <citation type="journal article" date="1994" name="Microbiology">
        <title>Analysis of the induction of general stress proteins of Bacillus subtilis.</title>
        <authorList>
            <person name="Voelker U."/>
            <person name="Engelmann S."/>
            <person name="Maul B."/>
            <person name="Riethdorf S."/>
            <person name="Voelker A."/>
            <person name="Schmid R."/>
            <person name="Mach H."/>
            <person name="Hecker M."/>
        </authorList>
    </citation>
    <scope>PROTEIN SEQUENCE OF 1-11</scope>
    <source>
        <strain>168 / IS58</strain>
    </source>
</reference>
<proteinExistence type="evidence at protein level"/>
<sequence length="140" mass="15877">MNQQDIKQKVLDVLDHHKVGSLATVQKGKPHSRYMTFFHDGLTIYTPTSKETHKAEEIENNPNVHILLGYDCEGFGDAYVEVAGKAKINNSAELKDKIWSSKLERWFDGKDDPNLVILEIEPEDIRLMNAGEKTPVSLEL</sequence>
<protein>
    <recommendedName>
        <fullName>General stress protein 26</fullName>
        <shortName>GSP26</shortName>
    </recommendedName>
</protein>
<feature type="chain" id="PRO_0000050079" description="General stress protein 26">
    <location>
        <begin position="1"/>
        <end position="140"/>
    </location>
</feature>
<accession>P80238</accession>
<accession>P96580</accession>
<keyword id="KW-0903">Direct protein sequencing</keyword>
<keyword id="KW-1185">Reference proteome</keyword>
<keyword id="KW-0346">Stress response</keyword>
<organism>
    <name type="scientific">Bacillus subtilis (strain 168)</name>
    <dbReference type="NCBI Taxonomy" id="224308"/>
    <lineage>
        <taxon>Bacteria</taxon>
        <taxon>Bacillati</taxon>
        <taxon>Bacillota</taxon>
        <taxon>Bacilli</taxon>
        <taxon>Bacillales</taxon>
        <taxon>Bacillaceae</taxon>
        <taxon>Bacillus</taxon>
    </lineage>
</organism>